<protein>
    <recommendedName>
        <fullName evidence="1">Glutaminase</fullName>
        <ecNumber evidence="1">3.5.1.2</ecNumber>
    </recommendedName>
</protein>
<organism>
    <name type="scientific">Pseudomonas putida (strain ATCC 700007 / DSM 6899 / JCM 31910 / BCRC 17059 / LMG 24140 / F1)</name>
    <dbReference type="NCBI Taxonomy" id="351746"/>
    <lineage>
        <taxon>Bacteria</taxon>
        <taxon>Pseudomonadati</taxon>
        <taxon>Pseudomonadota</taxon>
        <taxon>Gammaproteobacteria</taxon>
        <taxon>Pseudomonadales</taxon>
        <taxon>Pseudomonadaceae</taxon>
        <taxon>Pseudomonas</taxon>
    </lineage>
</organism>
<name>GLSA_PSEP1</name>
<reference key="1">
    <citation type="submission" date="2007-05" db="EMBL/GenBank/DDBJ databases">
        <title>Complete sequence of Pseudomonas putida F1.</title>
        <authorList>
            <consortium name="US DOE Joint Genome Institute"/>
            <person name="Copeland A."/>
            <person name="Lucas S."/>
            <person name="Lapidus A."/>
            <person name="Barry K."/>
            <person name="Detter J.C."/>
            <person name="Glavina del Rio T."/>
            <person name="Hammon N."/>
            <person name="Israni S."/>
            <person name="Dalin E."/>
            <person name="Tice H."/>
            <person name="Pitluck S."/>
            <person name="Chain P."/>
            <person name="Malfatti S."/>
            <person name="Shin M."/>
            <person name="Vergez L."/>
            <person name="Schmutz J."/>
            <person name="Larimer F."/>
            <person name="Land M."/>
            <person name="Hauser L."/>
            <person name="Kyrpides N."/>
            <person name="Lykidis A."/>
            <person name="Parales R."/>
            <person name="Richardson P."/>
        </authorList>
    </citation>
    <scope>NUCLEOTIDE SEQUENCE [LARGE SCALE GENOMIC DNA]</scope>
    <source>
        <strain>ATCC 700007 / DSM 6899 / JCM 31910 / BCRC 17059 / LMG 24140 / F1</strain>
    </source>
</reference>
<gene>
    <name evidence="1" type="primary">glsA</name>
    <name type="ordered locus">Pput_3197</name>
</gene>
<accession>A5W5B3</accession>
<comment type="catalytic activity">
    <reaction evidence="1">
        <text>L-glutamine + H2O = L-glutamate + NH4(+)</text>
        <dbReference type="Rhea" id="RHEA:15889"/>
        <dbReference type="ChEBI" id="CHEBI:15377"/>
        <dbReference type="ChEBI" id="CHEBI:28938"/>
        <dbReference type="ChEBI" id="CHEBI:29985"/>
        <dbReference type="ChEBI" id="CHEBI:58359"/>
        <dbReference type="EC" id="3.5.1.2"/>
    </reaction>
</comment>
<comment type="subunit">
    <text evidence="1">Homotetramer.</text>
</comment>
<comment type="similarity">
    <text evidence="1">Belongs to the glutaminase family.</text>
</comment>
<sequence>MQTLLNEILEEVRPLIGKGKVADYIPALADVPANQLGIAVYGNDGSYHCAGDARVPFSVQSISKVFSLVQAIGHSGEAIWERLGHEPSGQPFNSLVQLEFERGRPRNPFINAGALVICDINQSRFAAPTLSMRDFVRRLSGNPHISINTRVADSEYQFRARNAAMAYLMQSFGNFHNEVETVLRSYFSYCALQMNCLDLARAFCFLANDGFCKHSGEQILTRRQTQQVNSIMATSGLYDEAGNFAFRVGLPGKSGVGGGIVAIVPGQFTVCVWSPELNAAGNSLAGMAALELLSSRIGWSVF</sequence>
<keyword id="KW-0378">Hydrolase</keyword>
<dbReference type="EC" id="3.5.1.2" evidence="1"/>
<dbReference type="EMBL" id="CP000712">
    <property type="protein sequence ID" value="ABQ79323.1"/>
    <property type="molecule type" value="Genomic_DNA"/>
</dbReference>
<dbReference type="SMR" id="A5W5B3"/>
<dbReference type="KEGG" id="ppf:Pput_3197"/>
<dbReference type="eggNOG" id="COG2066">
    <property type="taxonomic scope" value="Bacteria"/>
</dbReference>
<dbReference type="HOGENOM" id="CLU_027932_1_1_6"/>
<dbReference type="GO" id="GO:0004359">
    <property type="term" value="F:glutaminase activity"/>
    <property type="evidence" value="ECO:0007669"/>
    <property type="project" value="UniProtKB-UniRule"/>
</dbReference>
<dbReference type="GO" id="GO:0006537">
    <property type="term" value="P:glutamate biosynthetic process"/>
    <property type="evidence" value="ECO:0007669"/>
    <property type="project" value="TreeGrafter"/>
</dbReference>
<dbReference type="GO" id="GO:0006543">
    <property type="term" value="P:glutamine catabolic process"/>
    <property type="evidence" value="ECO:0007669"/>
    <property type="project" value="TreeGrafter"/>
</dbReference>
<dbReference type="FunFam" id="3.40.710.10:FF:000005">
    <property type="entry name" value="Glutaminase"/>
    <property type="match status" value="1"/>
</dbReference>
<dbReference type="Gene3D" id="3.40.710.10">
    <property type="entry name" value="DD-peptidase/beta-lactamase superfamily"/>
    <property type="match status" value="1"/>
</dbReference>
<dbReference type="HAMAP" id="MF_00313">
    <property type="entry name" value="Glutaminase"/>
    <property type="match status" value="1"/>
</dbReference>
<dbReference type="InterPro" id="IPR012338">
    <property type="entry name" value="Beta-lactam/transpept-like"/>
</dbReference>
<dbReference type="InterPro" id="IPR015868">
    <property type="entry name" value="Glutaminase"/>
</dbReference>
<dbReference type="NCBIfam" id="TIGR03814">
    <property type="entry name" value="Gln_ase"/>
    <property type="match status" value="1"/>
</dbReference>
<dbReference type="NCBIfam" id="NF002132">
    <property type="entry name" value="PRK00971.1-1"/>
    <property type="match status" value="1"/>
</dbReference>
<dbReference type="NCBIfam" id="NF002133">
    <property type="entry name" value="PRK00971.1-2"/>
    <property type="match status" value="1"/>
</dbReference>
<dbReference type="PANTHER" id="PTHR12544">
    <property type="entry name" value="GLUTAMINASE"/>
    <property type="match status" value="1"/>
</dbReference>
<dbReference type="PANTHER" id="PTHR12544:SF29">
    <property type="entry name" value="GLUTAMINASE"/>
    <property type="match status" value="1"/>
</dbReference>
<dbReference type="Pfam" id="PF04960">
    <property type="entry name" value="Glutaminase"/>
    <property type="match status" value="1"/>
</dbReference>
<dbReference type="SUPFAM" id="SSF56601">
    <property type="entry name" value="beta-lactamase/transpeptidase-like"/>
    <property type="match status" value="1"/>
</dbReference>
<feature type="chain" id="PRO_1000048344" description="Glutaminase">
    <location>
        <begin position="1"/>
        <end position="302"/>
    </location>
</feature>
<feature type="binding site" evidence="1">
    <location>
        <position position="61"/>
    </location>
    <ligand>
        <name>substrate</name>
    </ligand>
</feature>
<feature type="binding site" evidence="1">
    <location>
        <position position="111"/>
    </location>
    <ligand>
        <name>substrate</name>
    </ligand>
</feature>
<feature type="binding site" evidence="1">
    <location>
        <position position="155"/>
    </location>
    <ligand>
        <name>substrate</name>
    </ligand>
</feature>
<feature type="binding site" evidence="1">
    <location>
        <position position="162"/>
    </location>
    <ligand>
        <name>substrate</name>
    </ligand>
</feature>
<feature type="binding site" evidence="1">
    <location>
        <position position="186"/>
    </location>
    <ligand>
        <name>substrate</name>
    </ligand>
</feature>
<feature type="binding site" evidence="1">
    <location>
        <position position="238"/>
    </location>
    <ligand>
        <name>substrate</name>
    </ligand>
</feature>
<feature type="binding site" evidence="1">
    <location>
        <position position="256"/>
    </location>
    <ligand>
        <name>substrate</name>
    </ligand>
</feature>
<evidence type="ECO:0000255" key="1">
    <source>
        <dbReference type="HAMAP-Rule" id="MF_00313"/>
    </source>
</evidence>
<proteinExistence type="inferred from homology"/>